<organismHost>
    <name type="scientific">Enterobacteriaceae</name>
    <dbReference type="NCBI Taxonomy" id="543"/>
</organismHost>
<accession>Q38623</accession>
<gene>
    <name type="ordered locus">Mup20</name>
</gene>
<reference key="1">
    <citation type="submission" date="1987-09" db="EMBL/GenBank/DDBJ databases">
        <authorList>
            <person name="Stoddard S.F."/>
            <person name="Howe M.M."/>
        </authorList>
    </citation>
    <scope>NUCLEOTIDE SEQUENCE [GENOMIC DNA]</scope>
</reference>
<reference key="2">
    <citation type="journal article" date="2002" name="J. Mol. Biol.">
        <title>Bacteriophage Mu genome sequence: analysis and comparison with Mu-like prophages in Haemophilus, Neisseria and Deinococcus.</title>
        <authorList>
            <person name="Morgan G.J."/>
            <person name="Hatfull G.F."/>
            <person name="Casjens S."/>
            <person name="Hendrix R.W."/>
        </authorList>
    </citation>
    <scope>NUCLEOTIDE SEQUENCE [LARGE SCALE GENOMIC DNA]</scope>
</reference>
<reference key="3">
    <citation type="journal article" date="1989" name="J. Bacteriol.">
        <title>Localization and regulation of bacteriophage Mu promoters.</title>
        <authorList>
            <person name="Stoddard S.F."/>
            <person name="Howe M.M."/>
        </authorList>
    </citation>
    <scope>INDUCTION</scope>
</reference>
<proteinExistence type="evidence at transcript level"/>
<comment type="subcellular location">
    <subcellularLocation>
        <location evidence="3">Membrane</location>
        <topology evidence="3">Single-pass membrane protein</topology>
    </subcellularLocation>
</comment>
<comment type="induction">
    <text evidence="2">Expressed in the intermediate phase of the viral replicative cycle.</text>
</comment>
<dbReference type="EMBL" id="Y00419">
    <property type="protein sequence ID" value="CAA68480.1"/>
    <property type="molecule type" value="Genomic_DNA"/>
</dbReference>
<dbReference type="EMBL" id="AF083977">
    <property type="protein sequence ID" value="AAF01097.1"/>
    <property type="molecule type" value="Genomic_DNA"/>
</dbReference>
<dbReference type="RefSeq" id="NP_050624.1">
    <property type="nucleotide sequence ID" value="NC_000929.1"/>
</dbReference>
<dbReference type="SMR" id="Q38623"/>
<dbReference type="GeneID" id="2636298"/>
<dbReference type="KEGG" id="vg:2636298"/>
<dbReference type="Proteomes" id="UP000002611">
    <property type="component" value="Genome"/>
</dbReference>
<dbReference type="GO" id="GO:0016020">
    <property type="term" value="C:membrane"/>
    <property type="evidence" value="ECO:0007669"/>
    <property type="project" value="UniProtKB-SubCell"/>
</dbReference>
<feature type="chain" id="PRO_0000077815" description="Uncharacterized protein gp20">
    <location>
        <begin position="1"/>
        <end position="39"/>
    </location>
</feature>
<feature type="transmembrane region" description="Helical" evidence="1">
    <location>
        <begin position="18"/>
        <end position="38"/>
    </location>
</feature>
<protein>
    <recommendedName>
        <fullName>Uncharacterized protein gp20</fullName>
    </recommendedName>
    <alternativeName>
        <fullName>Gene product 20</fullName>
        <shortName>gp20</shortName>
    </alternativeName>
</protein>
<organism>
    <name type="scientific">Escherichia phage Mu</name>
    <name type="common">Bacteriophage Mu</name>
    <dbReference type="NCBI Taxonomy" id="2681603"/>
    <lineage>
        <taxon>Viruses</taxon>
        <taxon>Duplodnaviria</taxon>
        <taxon>Heunggongvirae</taxon>
        <taxon>Uroviricota</taxon>
        <taxon>Caudoviricetes</taxon>
        <taxon>Muvirus</taxon>
        <taxon>Muvirus mu</taxon>
    </lineage>
</organism>
<evidence type="ECO:0000255" key="1"/>
<evidence type="ECO:0000269" key="2">
    <source>
    </source>
</evidence>
<evidence type="ECO:0000305" key="3"/>
<name>VG20_BPMU</name>
<sequence>MYRKFSDECFGPSTLINAIKVIALVVLITISAVVYLSVC</sequence>
<keyword id="KW-0472">Membrane</keyword>
<keyword id="KW-1185">Reference proteome</keyword>
<keyword id="KW-0812">Transmembrane</keyword>
<keyword id="KW-1133">Transmembrane helix</keyword>